<name>YBOX3_HUMAN</name>
<dbReference type="EMBL" id="M24069">
    <property type="protein sequence ID" value="AAA35749.1"/>
    <property type="status" value="ALT_INIT"/>
    <property type="molecule type" value="mRNA"/>
</dbReference>
<dbReference type="EMBL" id="L29071">
    <property type="protein sequence ID" value="AAA79243.1"/>
    <property type="molecule type" value="Genomic_DNA"/>
</dbReference>
<dbReference type="EMBL" id="L29064">
    <property type="protein sequence ID" value="AAA79243.1"/>
    <property type="status" value="JOINED"/>
    <property type="molecule type" value="Genomic_DNA"/>
</dbReference>
<dbReference type="EMBL" id="L29065">
    <property type="protein sequence ID" value="AAA79243.1"/>
    <property type="status" value="JOINED"/>
    <property type="molecule type" value="Genomic_DNA"/>
</dbReference>
<dbReference type="EMBL" id="L29066">
    <property type="protein sequence ID" value="AAA79243.1"/>
    <property type="status" value="JOINED"/>
    <property type="molecule type" value="Genomic_DNA"/>
</dbReference>
<dbReference type="EMBL" id="L29067">
    <property type="protein sequence ID" value="AAA79243.1"/>
    <property type="status" value="JOINED"/>
    <property type="molecule type" value="Genomic_DNA"/>
</dbReference>
<dbReference type="EMBL" id="L29068">
    <property type="protein sequence ID" value="AAA79243.1"/>
    <property type="status" value="JOINED"/>
    <property type="molecule type" value="Genomic_DNA"/>
</dbReference>
<dbReference type="EMBL" id="L29069">
    <property type="protein sequence ID" value="AAA79243.1"/>
    <property type="status" value="JOINED"/>
    <property type="molecule type" value="Genomic_DNA"/>
</dbReference>
<dbReference type="EMBL" id="L29070">
    <property type="protein sequence ID" value="AAA79243.1"/>
    <property type="status" value="JOINED"/>
    <property type="molecule type" value="Genomic_DNA"/>
</dbReference>
<dbReference type="EMBL" id="X95325">
    <property type="protein sequence ID" value="CAA64631.1"/>
    <property type="molecule type" value="mRNA"/>
</dbReference>
<dbReference type="EMBL" id="X72712">
    <property type="protein sequence ID" value="CAA51261.1"/>
    <property type="molecule type" value="mRNA"/>
</dbReference>
<dbReference type="EMBL" id="AK314846">
    <property type="protein sequence ID" value="BAG37363.1"/>
    <property type="molecule type" value="mRNA"/>
</dbReference>
<dbReference type="EMBL" id="CH471094">
    <property type="protein sequence ID" value="EAW96201.1"/>
    <property type="molecule type" value="Genomic_DNA"/>
</dbReference>
<dbReference type="EMBL" id="CH471094">
    <property type="protein sequence ID" value="EAW96203.1"/>
    <property type="molecule type" value="Genomic_DNA"/>
</dbReference>
<dbReference type="EMBL" id="BC008801">
    <property type="protein sequence ID" value="AAH08801.1"/>
    <property type="molecule type" value="mRNA"/>
</dbReference>
<dbReference type="EMBL" id="BC015564">
    <property type="protein sequence ID" value="AAH15564.1"/>
    <property type="molecule type" value="mRNA"/>
</dbReference>
<dbReference type="EMBL" id="BC015913">
    <property type="protein sequence ID" value="AAH15913.1"/>
    <property type="molecule type" value="mRNA"/>
</dbReference>
<dbReference type="EMBL" id="BC021926">
    <property type="protein sequence ID" value="AAH21926.1"/>
    <property type="molecule type" value="mRNA"/>
</dbReference>
<dbReference type="CCDS" id="CCDS44831.1">
    <molecule id="P16989-2"/>
</dbReference>
<dbReference type="CCDS" id="CCDS8630.1">
    <molecule id="P16989-1"/>
</dbReference>
<dbReference type="PIR" id="I53354">
    <property type="entry name" value="I53354"/>
</dbReference>
<dbReference type="PIR" id="S69501">
    <property type="entry name" value="S69501"/>
</dbReference>
<dbReference type="RefSeq" id="NP_001138898.1">
    <molecule id="P16989-2"/>
    <property type="nucleotide sequence ID" value="NM_001145426.2"/>
</dbReference>
<dbReference type="RefSeq" id="NP_003642.3">
    <molecule id="P16989-1"/>
    <property type="nucleotide sequence ID" value="NM_003651.4"/>
</dbReference>
<dbReference type="RefSeq" id="XP_047285755.1">
    <molecule id="P16989-1"/>
    <property type="nucleotide sequence ID" value="XM_047429799.1"/>
</dbReference>
<dbReference type="RefSeq" id="XP_054229662.1">
    <molecule id="P16989-1"/>
    <property type="nucleotide sequence ID" value="XM_054373687.1"/>
</dbReference>
<dbReference type="BMRB" id="P16989"/>
<dbReference type="SMR" id="P16989"/>
<dbReference type="BioGRID" id="114101">
    <property type="interactions" value="404"/>
</dbReference>
<dbReference type="CORUM" id="P16989"/>
<dbReference type="DIP" id="DIP-42489N"/>
<dbReference type="FunCoup" id="P16989">
    <property type="interactions" value="866"/>
</dbReference>
<dbReference type="IntAct" id="P16989">
    <property type="interactions" value="179"/>
</dbReference>
<dbReference type="MINT" id="P16989"/>
<dbReference type="STRING" id="9606.ENSP00000228251"/>
<dbReference type="ChEMBL" id="CHEMBL4295720"/>
<dbReference type="GlyGen" id="P16989">
    <property type="glycosylation" value="3 sites, 3 N-linked glycans (1 site), 1 O-linked glycan (2 sites)"/>
</dbReference>
<dbReference type="iPTMnet" id="P16989"/>
<dbReference type="MetOSite" id="P16989"/>
<dbReference type="PhosphoSitePlus" id="P16989"/>
<dbReference type="BioMuta" id="YBX3"/>
<dbReference type="DMDM" id="97536050"/>
<dbReference type="CPTAC" id="CPTAC-343"/>
<dbReference type="CPTAC" id="CPTAC-344"/>
<dbReference type="jPOST" id="P16989"/>
<dbReference type="MassIVE" id="P16989"/>
<dbReference type="PaxDb" id="9606-ENSP00000228251"/>
<dbReference type="PeptideAtlas" id="P16989"/>
<dbReference type="ProteomicsDB" id="53404">
    <molecule id="P16989-1"/>
</dbReference>
<dbReference type="ProteomicsDB" id="53405">
    <molecule id="P16989-2"/>
</dbReference>
<dbReference type="ProteomicsDB" id="53406">
    <molecule id="P16989-3"/>
</dbReference>
<dbReference type="Pumba" id="P16989"/>
<dbReference type="Antibodypedia" id="11792">
    <property type="antibodies" value="244 antibodies from 24 providers"/>
</dbReference>
<dbReference type="DNASU" id="8531"/>
<dbReference type="Ensembl" id="ENST00000228251.9">
    <molecule id="P16989-1"/>
    <property type="protein sequence ID" value="ENSP00000228251.4"/>
    <property type="gene ID" value="ENSG00000060138.13"/>
</dbReference>
<dbReference type="Ensembl" id="ENST00000279550.11">
    <molecule id="P16989-2"/>
    <property type="protein sequence ID" value="ENSP00000279550.7"/>
    <property type="gene ID" value="ENSG00000060138.13"/>
</dbReference>
<dbReference type="GeneID" id="8531"/>
<dbReference type="KEGG" id="hsa:8531"/>
<dbReference type="MANE-Select" id="ENST00000228251.9">
    <property type="protein sequence ID" value="ENSP00000228251.4"/>
    <property type="RefSeq nucleotide sequence ID" value="NM_003651.5"/>
    <property type="RefSeq protein sequence ID" value="NP_003642.3"/>
</dbReference>
<dbReference type="UCSC" id="uc001qyt.4">
    <molecule id="P16989-1"/>
    <property type="organism name" value="human"/>
</dbReference>
<dbReference type="AGR" id="HGNC:2428"/>
<dbReference type="CTD" id="8531"/>
<dbReference type="DisGeNET" id="8531"/>
<dbReference type="GeneCards" id="YBX3"/>
<dbReference type="HGNC" id="HGNC:2428">
    <property type="gene designation" value="YBX3"/>
</dbReference>
<dbReference type="HPA" id="ENSG00000060138">
    <property type="expression patterns" value="Group enriched (skeletal muscle, tongue)"/>
</dbReference>
<dbReference type="MIM" id="603437">
    <property type="type" value="gene"/>
</dbReference>
<dbReference type="neXtProt" id="NX_P16989"/>
<dbReference type="OpenTargets" id="ENSG00000060138"/>
<dbReference type="PharmGKB" id="PA26929"/>
<dbReference type="VEuPathDB" id="HostDB:ENSG00000060138"/>
<dbReference type="eggNOG" id="KOG3070">
    <property type="taxonomic scope" value="Eukaryota"/>
</dbReference>
<dbReference type="GeneTree" id="ENSGT00940000159340"/>
<dbReference type="HOGENOM" id="CLU_063071_2_0_1"/>
<dbReference type="InParanoid" id="P16989"/>
<dbReference type="OMA" id="FYPQFRQ"/>
<dbReference type="OrthoDB" id="203339at2759"/>
<dbReference type="PAN-GO" id="P16989">
    <property type="GO annotations" value="3 GO annotations based on evolutionary models"/>
</dbReference>
<dbReference type="PhylomeDB" id="P16989"/>
<dbReference type="TreeFam" id="TF317306"/>
<dbReference type="PathwayCommons" id="P16989"/>
<dbReference type="SignaLink" id="P16989"/>
<dbReference type="BioGRID-ORCS" id="8531">
    <property type="hits" value="15 hits in 1168 CRISPR screens"/>
</dbReference>
<dbReference type="CD-CODE" id="232F8A39">
    <property type="entry name" value="P-body"/>
</dbReference>
<dbReference type="CD-CODE" id="DEE660B4">
    <property type="entry name" value="Stress granule"/>
</dbReference>
<dbReference type="ChiTaRS" id="YBX3">
    <property type="organism name" value="human"/>
</dbReference>
<dbReference type="GeneWiki" id="CSDA_(gene)"/>
<dbReference type="GenomeRNAi" id="8531"/>
<dbReference type="Pharos" id="P16989">
    <property type="development level" value="Tbio"/>
</dbReference>
<dbReference type="PRO" id="PR:P16989"/>
<dbReference type="Proteomes" id="UP000005640">
    <property type="component" value="Chromosome 12"/>
</dbReference>
<dbReference type="RNAct" id="P16989">
    <property type="molecule type" value="protein"/>
</dbReference>
<dbReference type="Bgee" id="ENSG00000060138">
    <property type="expression patterns" value="Expressed in gastrocnemius and 207 other cell types or tissues"/>
</dbReference>
<dbReference type="ExpressionAtlas" id="P16989">
    <property type="expression patterns" value="baseline and differential"/>
</dbReference>
<dbReference type="GO" id="GO:0005923">
    <property type="term" value="C:bicellular tight junction"/>
    <property type="evidence" value="ECO:0000250"/>
    <property type="project" value="BHF-UCL"/>
</dbReference>
<dbReference type="GO" id="GO:0005737">
    <property type="term" value="C:cytoplasm"/>
    <property type="evidence" value="ECO:0000304"/>
    <property type="project" value="ProtInc"/>
</dbReference>
<dbReference type="GO" id="GO:0005829">
    <property type="term" value="C:cytosol"/>
    <property type="evidence" value="ECO:0000314"/>
    <property type="project" value="HPA"/>
</dbReference>
<dbReference type="GO" id="GO:0005634">
    <property type="term" value="C:nucleus"/>
    <property type="evidence" value="ECO:0000250"/>
    <property type="project" value="BHF-UCL"/>
</dbReference>
<dbReference type="GO" id="GO:0048471">
    <property type="term" value="C:perinuclear region of cytoplasm"/>
    <property type="evidence" value="ECO:0000250"/>
    <property type="project" value="BHF-UCL"/>
</dbReference>
<dbReference type="GO" id="GO:0045202">
    <property type="term" value="C:synapse"/>
    <property type="evidence" value="ECO:0007669"/>
    <property type="project" value="Ensembl"/>
</dbReference>
<dbReference type="GO" id="GO:0003730">
    <property type="term" value="F:mRNA 3'-UTR binding"/>
    <property type="evidence" value="ECO:0000250"/>
    <property type="project" value="BHF-UCL"/>
</dbReference>
<dbReference type="GO" id="GO:0003676">
    <property type="term" value="F:nucleic acid binding"/>
    <property type="evidence" value="ECO:0000318"/>
    <property type="project" value="GO_Central"/>
</dbReference>
<dbReference type="GO" id="GO:0043021">
    <property type="term" value="F:ribonucleoprotein complex binding"/>
    <property type="evidence" value="ECO:0007669"/>
    <property type="project" value="Ensembl"/>
</dbReference>
<dbReference type="GO" id="GO:0003723">
    <property type="term" value="F:RNA binding"/>
    <property type="evidence" value="ECO:0007005"/>
    <property type="project" value="UniProtKB"/>
</dbReference>
<dbReference type="GO" id="GO:0000977">
    <property type="term" value="F:RNA polymerase II transcription regulatory region sequence-specific DNA binding"/>
    <property type="evidence" value="ECO:0007669"/>
    <property type="project" value="Ensembl"/>
</dbReference>
<dbReference type="GO" id="GO:0031267">
    <property type="term" value="F:small GTPase binding"/>
    <property type="evidence" value="ECO:0000250"/>
    <property type="project" value="BHF-UCL"/>
</dbReference>
<dbReference type="GO" id="GO:0070935">
    <property type="term" value="P:3'-UTR-mediated mRNA stabilization"/>
    <property type="evidence" value="ECO:0000305"/>
    <property type="project" value="BHF-UCL"/>
</dbReference>
<dbReference type="GO" id="GO:0006915">
    <property type="term" value="P:apoptotic process"/>
    <property type="evidence" value="ECO:0007669"/>
    <property type="project" value="Ensembl"/>
</dbReference>
<dbReference type="GO" id="GO:0071474">
    <property type="term" value="P:cellular hyperosmotic response"/>
    <property type="evidence" value="ECO:0000315"/>
    <property type="project" value="BHF-UCL"/>
</dbReference>
<dbReference type="GO" id="GO:0071356">
    <property type="term" value="P:cellular response to tumor necrosis factor"/>
    <property type="evidence" value="ECO:0000315"/>
    <property type="project" value="BHF-UCL"/>
</dbReference>
<dbReference type="GO" id="GO:0035234">
    <property type="term" value="P:ectopic germ cell programmed cell death"/>
    <property type="evidence" value="ECO:0007669"/>
    <property type="project" value="Ensembl"/>
</dbReference>
<dbReference type="GO" id="GO:0009566">
    <property type="term" value="P:fertilization"/>
    <property type="evidence" value="ECO:0007669"/>
    <property type="project" value="Ensembl"/>
</dbReference>
<dbReference type="GO" id="GO:0001701">
    <property type="term" value="P:in utero embryonic development"/>
    <property type="evidence" value="ECO:0007669"/>
    <property type="project" value="Ensembl"/>
</dbReference>
<dbReference type="GO" id="GO:0008584">
    <property type="term" value="P:male gonad development"/>
    <property type="evidence" value="ECO:0007669"/>
    <property type="project" value="Ensembl"/>
</dbReference>
<dbReference type="GO" id="GO:1902219">
    <property type="term" value="P:negative regulation of intrinsic apoptotic signaling pathway in response to osmotic stress"/>
    <property type="evidence" value="ECO:0000315"/>
    <property type="project" value="BHF-UCL"/>
</dbReference>
<dbReference type="GO" id="GO:0060546">
    <property type="term" value="P:negative regulation of necroptotic process"/>
    <property type="evidence" value="ECO:0000315"/>
    <property type="project" value="BHF-UCL"/>
</dbReference>
<dbReference type="GO" id="GO:2000242">
    <property type="term" value="P:negative regulation of reproductive process"/>
    <property type="evidence" value="ECO:0007669"/>
    <property type="project" value="Ensembl"/>
</dbReference>
<dbReference type="GO" id="GO:0048642">
    <property type="term" value="P:negative regulation of skeletal muscle tissue development"/>
    <property type="evidence" value="ECO:0007669"/>
    <property type="project" value="Ensembl"/>
</dbReference>
<dbReference type="GO" id="GO:0000122">
    <property type="term" value="P:negative regulation of transcription by RNA polymerase II"/>
    <property type="evidence" value="ECO:0007669"/>
    <property type="project" value="Ensembl"/>
</dbReference>
<dbReference type="GO" id="GO:2000767">
    <property type="term" value="P:positive regulation of cytoplasmic translation"/>
    <property type="evidence" value="ECO:0000250"/>
    <property type="project" value="BHF-UCL"/>
</dbReference>
<dbReference type="GO" id="GO:0046622">
    <property type="term" value="P:positive regulation of organ growth"/>
    <property type="evidence" value="ECO:0007669"/>
    <property type="project" value="Ensembl"/>
</dbReference>
<dbReference type="GO" id="GO:0010468">
    <property type="term" value="P:regulation of gene expression"/>
    <property type="evidence" value="ECO:0000318"/>
    <property type="project" value="GO_Central"/>
</dbReference>
<dbReference type="GO" id="GO:0007283">
    <property type="term" value="P:spermatogenesis"/>
    <property type="evidence" value="ECO:0007669"/>
    <property type="project" value="Ensembl"/>
</dbReference>
<dbReference type="CDD" id="cd04458">
    <property type="entry name" value="CSP_CDS"/>
    <property type="match status" value="1"/>
</dbReference>
<dbReference type="FunFam" id="2.40.50.140:FF:000054">
    <property type="entry name" value="Nuclease-sensitive element-binding protein 1"/>
    <property type="match status" value="1"/>
</dbReference>
<dbReference type="Gene3D" id="2.40.50.140">
    <property type="entry name" value="Nucleic acid-binding proteins"/>
    <property type="match status" value="1"/>
</dbReference>
<dbReference type="InterPro" id="IPR050181">
    <property type="entry name" value="Cold_shock_domain"/>
</dbReference>
<dbReference type="InterPro" id="IPR011129">
    <property type="entry name" value="CSD"/>
</dbReference>
<dbReference type="InterPro" id="IPR019844">
    <property type="entry name" value="CSD_CS"/>
</dbReference>
<dbReference type="InterPro" id="IPR002059">
    <property type="entry name" value="CSP_DNA-bd"/>
</dbReference>
<dbReference type="InterPro" id="IPR012340">
    <property type="entry name" value="NA-bd_OB-fold"/>
</dbReference>
<dbReference type="PANTHER" id="PTHR11544">
    <property type="entry name" value="COLD SHOCK DOMAIN CONTAINING PROTEINS"/>
    <property type="match status" value="1"/>
</dbReference>
<dbReference type="Pfam" id="PF00313">
    <property type="entry name" value="CSD"/>
    <property type="match status" value="1"/>
</dbReference>
<dbReference type="PRINTS" id="PR00050">
    <property type="entry name" value="COLDSHOCK"/>
</dbReference>
<dbReference type="SMART" id="SM00357">
    <property type="entry name" value="CSP"/>
    <property type="match status" value="1"/>
</dbReference>
<dbReference type="SUPFAM" id="SSF50249">
    <property type="entry name" value="Nucleic acid-binding proteins"/>
    <property type="match status" value="1"/>
</dbReference>
<dbReference type="PROSITE" id="PS00352">
    <property type="entry name" value="CSD_1"/>
    <property type="match status" value="1"/>
</dbReference>
<dbReference type="PROSITE" id="PS51857">
    <property type="entry name" value="CSD_2"/>
    <property type="match status" value="1"/>
</dbReference>
<sequence>MSEAGEATTTTTTTLPQAPTEAAAAAPQDPAPKSPVGSGAPQAAAPAPAAHVAGNPGGDAAPAATGTAAAASLATAAGSEDAEKKVLATKVLGTVKWFNVRNGYGFINRNDTKEDVFVHQTAIKKNNPRKYLRSVGDGETVEFDVVEGEKGAEAANVTGPDGVPVEGSRYAADRRRYRRGYYGRRRGPPRNYAGEEEEEGSGSSEGFDPPATDRQFSGARNQLRRPQYRPQYRQRRFPPYHVGQTFDRRSRVLPHPNRIQAGEIGEMKDGVPEGAQLQGPVHRNPTYRPRYRSRGPPRPRPAPAVGEAEDKENQQATSGPNQPSVRRGYRRPYNYRRRPRPPNAPSQDGKEAKAGEAPTENPAPPTQQSSAE</sequence>
<keyword id="KW-0007">Acetylation</keyword>
<keyword id="KW-0025">Alternative splicing</keyword>
<keyword id="KW-0963">Cytoplasm</keyword>
<keyword id="KW-0238">DNA-binding</keyword>
<keyword id="KW-0488">Methylation</keyword>
<keyword id="KW-0539">Nucleus</keyword>
<keyword id="KW-0597">Phosphoprotein</keyword>
<keyword id="KW-1267">Proteomics identification</keyword>
<keyword id="KW-1185">Reference proteome</keyword>
<keyword id="KW-0678">Repressor</keyword>
<keyword id="KW-0804">Transcription</keyword>
<keyword id="KW-0805">Transcription regulation</keyword>
<proteinExistence type="evidence at protein level"/>
<comment type="function">
    <text evidence="1">Binds to the GM-CSF promoter. Seems to act as a repressor. Also binds to full-length mRNA and to short RNA sequences containing the consensus site 5'-UCCAUCA-3'. May have a role in translation repression (By similarity).</text>
</comment>
<comment type="subunit">
    <text evidence="3 6">Found in a mRNP complex with YBX2 (By similarity). Interacts with RRP1B (PubMed:19710015).</text>
</comment>
<comment type="interaction">
    <interactant intactId="EBI-358193">
        <id>P16989</id>
    </interactant>
    <interactant intactId="EBI-357253">
        <id>P62136</id>
        <label>PPP1CA</label>
    </interactant>
    <organismsDiffer>false</organismsDiffer>
    <experiments>3</experiments>
</comment>
<comment type="interaction">
    <interactant intactId="EBI-358193">
        <id>P16989</id>
    </interactant>
    <interactant intactId="EBI-52318801">
        <id>Q9UBK9-2</id>
        <label>UXT</label>
    </interactant>
    <organismsDiffer>false</organismsDiffer>
    <experiments>4</experiments>
</comment>
<comment type="subcellular location">
    <subcellularLocation>
        <location>Cytoplasm</location>
    </subcellularLocation>
    <subcellularLocation>
        <location>Nucleus</location>
    </subcellularLocation>
</comment>
<comment type="alternative products">
    <event type="alternative splicing"/>
    <isoform>
        <id>P16989-1</id>
        <name>1</name>
        <sequence type="displayed"/>
    </isoform>
    <isoform>
        <id>P16989-2</id>
        <name>2</name>
        <sequence type="described" ref="VSP_001135"/>
    </isoform>
    <isoform>
        <id>P16989-3</id>
        <name>3</name>
        <sequence type="described" ref="VSP_001136"/>
    </isoform>
    <text>Additional isoforms seem to exist.</text>
</comment>
<comment type="tissue specificity">
    <text>Highly expressed in skeletal muscle and heart.</text>
</comment>
<comment type="sequence caution" evidence="11">
    <conflict type="erroneous initiation">
        <sequence resource="EMBL-CDS" id="AAA35749"/>
    </conflict>
    <text>Extended N-terminus.</text>
</comment>
<evidence type="ECO:0000250" key="1"/>
<evidence type="ECO:0000250" key="2">
    <source>
        <dbReference type="UniProtKB" id="Q62764"/>
    </source>
</evidence>
<evidence type="ECO:0000250" key="3">
    <source>
        <dbReference type="UniProtKB" id="Q9JKB3"/>
    </source>
</evidence>
<evidence type="ECO:0000256" key="4">
    <source>
        <dbReference type="SAM" id="MobiDB-lite"/>
    </source>
</evidence>
<evidence type="ECO:0000269" key="5">
    <source>
    </source>
</evidence>
<evidence type="ECO:0000269" key="6">
    <source>
    </source>
</evidence>
<evidence type="ECO:0000269" key="7">
    <source>
    </source>
</evidence>
<evidence type="ECO:0000269" key="8">
    <source>
    </source>
</evidence>
<evidence type="ECO:0000303" key="9">
    <source>
    </source>
</evidence>
<evidence type="ECO:0000303" key="10">
    <source>
    </source>
</evidence>
<evidence type="ECO:0000305" key="11"/>
<evidence type="ECO:0007744" key="12">
    <source>
    </source>
</evidence>
<evidence type="ECO:0007744" key="13">
    <source>
    </source>
</evidence>
<evidence type="ECO:0007744" key="14">
    <source>
    </source>
</evidence>
<evidence type="ECO:0007744" key="15">
    <source>
    </source>
</evidence>
<evidence type="ECO:0007744" key="16">
    <source>
    </source>
</evidence>
<evidence type="ECO:0007744" key="17">
    <source>
    </source>
</evidence>
<evidence type="ECO:0007744" key="18">
    <source>
    </source>
</evidence>
<evidence type="ECO:0007744" key="19">
    <source>
    </source>
</evidence>
<protein>
    <recommendedName>
        <fullName>Y-box-binding protein 3</fullName>
    </recommendedName>
    <alternativeName>
        <fullName>Cold shock domain-containing protein A</fullName>
    </alternativeName>
    <alternativeName>
        <fullName>DNA-binding protein A</fullName>
    </alternativeName>
    <alternativeName>
        <fullName>Single-strand DNA-binding protein NF-GMB</fullName>
    </alternativeName>
</protein>
<accession>P16989</accession>
<accession>B2RBW6</accession>
<accession>Q14121</accession>
<accession>Q969N6</accession>
<accession>Q96B76</accession>
<reference key="1">
    <citation type="journal article" date="1988" name="Gene">
        <title>Two human genes isolated by a novel method encode DNA-binding proteins containing a common region of homology.</title>
        <authorList>
            <person name="Sakura H."/>
            <person name="Maekawa T."/>
            <person name="Imamoto F."/>
            <person name="Yasuda K."/>
            <person name="Ishii S."/>
        </authorList>
    </citation>
    <scope>NUCLEOTIDE SEQUENCE [MRNA] (ISOFORM 3)</scope>
    <scope>VARIANT ALA-75</scope>
</reference>
<reference key="2">
    <citation type="journal article" date="1995" name="Eur. J. Biochem.">
        <title>Characterization of the gene for dbpA, a family member of the nucleic-acid-binding proteins containing a cold-shock domain.</title>
        <authorList>
            <person name="Kudo S."/>
            <person name="Mattei M.-G."/>
            <person name="Fukuda M."/>
        </authorList>
    </citation>
    <scope>NUCLEOTIDE SEQUENCE [GENOMIC DNA]</scope>
    <scope>ALTERNATIVE SPLICING</scope>
    <scope>VARIANT ALA-75</scope>
    <source>
        <tissue>Placenta</tissue>
    </source>
</reference>
<reference key="3">
    <citation type="journal article" date="1996" name="Nucleic Acids Res.">
        <title>Cold shock domain proteins repress transcription from the GM-CSF promoter.</title>
        <authorList>
            <person name="Coles L.S."/>
            <person name="Diamond P."/>
            <person name="Occhiodoro F."/>
            <person name="Vadas M.A."/>
            <person name="Shannon M.F."/>
        </authorList>
    </citation>
    <scope>NUCLEOTIDE SEQUENCE [MRNA] (ISOFORM 1)</scope>
</reference>
<reference key="4">
    <citation type="submission" date="1993-03" db="EMBL/GenBank/DDBJ databases">
        <authorList>
            <person name="Moschonas N.K."/>
        </authorList>
    </citation>
    <scope>NUCLEOTIDE SEQUENCE [MRNA] (ISOFORM 1)</scope>
    <source>
        <tissue>Blood</tissue>
    </source>
</reference>
<reference key="5">
    <citation type="journal article" date="2004" name="Nat. Genet.">
        <title>Complete sequencing and characterization of 21,243 full-length human cDNAs.</title>
        <authorList>
            <person name="Ota T."/>
            <person name="Suzuki Y."/>
            <person name="Nishikawa T."/>
            <person name="Otsuki T."/>
            <person name="Sugiyama T."/>
            <person name="Irie R."/>
            <person name="Wakamatsu A."/>
            <person name="Hayashi K."/>
            <person name="Sato H."/>
            <person name="Nagai K."/>
            <person name="Kimura K."/>
            <person name="Makita H."/>
            <person name="Sekine M."/>
            <person name="Obayashi M."/>
            <person name="Nishi T."/>
            <person name="Shibahara T."/>
            <person name="Tanaka T."/>
            <person name="Ishii S."/>
            <person name="Yamamoto J."/>
            <person name="Saito K."/>
            <person name="Kawai Y."/>
            <person name="Isono Y."/>
            <person name="Nakamura Y."/>
            <person name="Nagahari K."/>
            <person name="Murakami K."/>
            <person name="Yasuda T."/>
            <person name="Iwayanagi T."/>
            <person name="Wagatsuma M."/>
            <person name="Shiratori A."/>
            <person name="Sudo H."/>
            <person name="Hosoiri T."/>
            <person name="Kaku Y."/>
            <person name="Kodaira H."/>
            <person name="Kondo H."/>
            <person name="Sugawara M."/>
            <person name="Takahashi M."/>
            <person name="Kanda K."/>
            <person name="Yokoi T."/>
            <person name="Furuya T."/>
            <person name="Kikkawa E."/>
            <person name="Omura Y."/>
            <person name="Abe K."/>
            <person name="Kamihara K."/>
            <person name="Katsuta N."/>
            <person name="Sato K."/>
            <person name="Tanikawa M."/>
            <person name="Yamazaki M."/>
            <person name="Ninomiya K."/>
            <person name="Ishibashi T."/>
            <person name="Yamashita H."/>
            <person name="Murakawa K."/>
            <person name="Fujimori K."/>
            <person name="Tanai H."/>
            <person name="Kimata M."/>
            <person name="Watanabe M."/>
            <person name="Hiraoka S."/>
            <person name="Chiba Y."/>
            <person name="Ishida S."/>
            <person name="Ono Y."/>
            <person name="Takiguchi S."/>
            <person name="Watanabe S."/>
            <person name="Yosida M."/>
            <person name="Hotuta T."/>
            <person name="Kusano J."/>
            <person name="Kanehori K."/>
            <person name="Takahashi-Fujii A."/>
            <person name="Hara H."/>
            <person name="Tanase T.-O."/>
            <person name="Nomura Y."/>
            <person name="Togiya S."/>
            <person name="Komai F."/>
            <person name="Hara R."/>
            <person name="Takeuchi K."/>
            <person name="Arita M."/>
            <person name="Imose N."/>
            <person name="Musashino K."/>
            <person name="Yuuki H."/>
            <person name="Oshima A."/>
            <person name="Sasaki N."/>
            <person name="Aotsuka S."/>
            <person name="Yoshikawa Y."/>
            <person name="Matsunawa H."/>
            <person name="Ichihara T."/>
            <person name="Shiohata N."/>
            <person name="Sano S."/>
            <person name="Moriya S."/>
            <person name="Momiyama H."/>
            <person name="Satoh N."/>
            <person name="Takami S."/>
            <person name="Terashima Y."/>
            <person name="Suzuki O."/>
            <person name="Nakagawa S."/>
            <person name="Senoh A."/>
            <person name="Mizoguchi H."/>
            <person name="Goto Y."/>
            <person name="Shimizu F."/>
            <person name="Wakebe H."/>
            <person name="Hishigaki H."/>
            <person name="Watanabe T."/>
            <person name="Sugiyama A."/>
            <person name="Takemoto M."/>
            <person name="Kawakami B."/>
            <person name="Yamazaki M."/>
            <person name="Watanabe K."/>
            <person name="Kumagai A."/>
            <person name="Itakura S."/>
            <person name="Fukuzumi Y."/>
            <person name="Fujimori Y."/>
            <person name="Komiyama M."/>
            <person name="Tashiro H."/>
            <person name="Tanigami A."/>
            <person name="Fujiwara T."/>
            <person name="Ono T."/>
            <person name="Yamada K."/>
            <person name="Fujii Y."/>
            <person name="Ozaki K."/>
            <person name="Hirao M."/>
            <person name="Ohmori Y."/>
            <person name="Kawabata A."/>
            <person name="Hikiji T."/>
            <person name="Kobatake N."/>
            <person name="Inagaki H."/>
            <person name="Ikema Y."/>
            <person name="Okamoto S."/>
            <person name="Okitani R."/>
            <person name="Kawakami T."/>
            <person name="Noguchi S."/>
            <person name="Itoh T."/>
            <person name="Shigeta K."/>
            <person name="Senba T."/>
            <person name="Matsumura K."/>
            <person name="Nakajima Y."/>
            <person name="Mizuno T."/>
            <person name="Morinaga M."/>
            <person name="Sasaki M."/>
            <person name="Togashi T."/>
            <person name="Oyama M."/>
            <person name="Hata H."/>
            <person name="Watanabe M."/>
            <person name="Komatsu T."/>
            <person name="Mizushima-Sugano J."/>
            <person name="Satoh T."/>
            <person name="Shirai Y."/>
            <person name="Takahashi Y."/>
            <person name="Nakagawa K."/>
            <person name="Okumura K."/>
            <person name="Nagase T."/>
            <person name="Nomura N."/>
            <person name="Kikuchi H."/>
            <person name="Masuho Y."/>
            <person name="Yamashita R."/>
            <person name="Nakai K."/>
            <person name="Yada T."/>
            <person name="Nakamura Y."/>
            <person name="Ohara O."/>
            <person name="Isogai T."/>
            <person name="Sugano S."/>
        </authorList>
    </citation>
    <scope>NUCLEOTIDE SEQUENCE [LARGE SCALE MRNA] (ISOFORM 1)</scope>
</reference>
<reference key="6">
    <citation type="submission" date="2005-07" db="EMBL/GenBank/DDBJ databases">
        <authorList>
            <person name="Mural R.J."/>
            <person name="Istrail S."/>
            <person name="Sutton G.G."/>
            <person name="Florea L."/>
            <person name="Halpern A.L."/>
            <person name="Mobarry C.M."/>
            <person name="Lippert R."/>
            <person name="Walenz B."/>
            <person name="Shatkay H."/>
            <person name="Dew I."/>
            <person name="Miller J.R."/>
            <person name="Flanigan M.J."/>
            <person name="Edwards N.J."/>
            <person name="Bolanos R."/>
            <person name="Fasulo D."/>
            <person name="Halldorsson B.V."/>
            <person name="Hannenhalli S."/>
            <person name="Turner R."/>
            <person name="Yooseph S."/>
            <person name="Lu F."/>
            <person name="Nusskern D.R."/>
            <person name="Shue B.C."/>
            <person name="Zheng X.H."/>
            <person name="Zhong F."/>
            <person name="Delcher A.L."/>
            <person name="Huson D.H."/>
            <person name="Kravitz S.A."/>
            <person name="Mouchard L."/>
            <person name="Reinert K."/>
            <person name="Remington K.A."/>
            <person name="Clark A.G."/>
            <person name="Waterman M.S."/>
            <person name="Eichler E.E."/>
            <person name="Adams M.D."/>
            <person name="Hunkapiller M.W."/>
            <person name="Myers E.W."/>
            <person name="Venter J.C."/>
        </authorList>
    </citation>
    <scope>NUCLEOTIDE SEQUENCE [LARGE SCALE GENOMIC DNA]</scope>
</reference>
<reference key="7">
    <citation type="journal article" date="2004" name="Genome Res.">
        <title>The status, quality, and expansion of the NIH full-length cDNA project: the Mammalian Gene Collection (MGC).</title>
        <authorList>
            <consortium name="The MGC Project Team"/>
        </authorList>
    </citation>
    <scope>NUCLEOTIDE SEQUENCE [LARGE SCALE MRNA] (ISOFORMS 1 AND 2)</scope>
    <scope>VARIANT ALA-75</scope>
    <source>
        <tissue>Kidney</tissue>
        <tissue>Lung</tissue>
        <tissue>Lymph</tissue>
        <tissue>Muscle</tissue>
    </source>
</reference>
<reference key="8">
    <citation type="journal article" date="2008" name="Proc. Natl. Acad. Sci. U.S.A.">
        <title>A quantitative atlas of mitotic phosphorylation.</title>
        <authorList>
            <person name="Dephoure N."/>
            <person name="Zhou C."/>
            <person name="Villen J."/>
            <person name="Beausoleil S.A."/>
            <person name="Bakalarski C.E."/>
            <person name="Elledge S.J."/>
            <person name="Gygi S.P."/>
        </authorList>
    </citation>
    <scope>PHOSPHORYLATION [LARGE SCALE ANALYSIS] AT SER-34; SER-201; SER-203 AND SER-204</scope>
    <scope>IDENTIFICATION BY MASS SPECTROMETRY [LARGE SCALE ANALYSIS]</scope>
    <source>
        <tissue>Cervix carcinoma</tissue>
    </source>
</reference>
<reference key="9">
    <citation type="journal article" date="2009" name="Anal. Chem.">
        <title>Lys-N and trypsin cover complementary parts of the phosphoproteome in a refined SCX-based approach.</title>
        <authorList>
            <person name="Gauci S."/>
            <person name="Helbig A.O."/>
            <person name="Slijper M."/>
            <person name="Krijgsveld J."/>
            <person name="Heck A.J."/>
            <person name="Mohammed S."/>
        </authorList>
    </citation>
    <scope>ACETYLATION [LARGE SCALE ANALYSIS] AT SER-2</scope>
    <scope>CLEAVAGE OF INITIATOR METHIONINE [LARGE SCALE ANALYSIS]</scope>
    <scope>IDENTIFICATION BY MASS SPECTROMETRY [LARGE SCALE ANALYSIS]</scope>
</reference>
<reference key="10">
    <citation type="journal article" date="2009" name="J. Biol. Chem.">
        <title>The metastasis efficiency modifier ribosomal RNA processing 1 homolog B (RRP1B) is a chromatin-associated factor.</title>
        <authorList>
            <person name="Crawford N.P."/>
            <person name="Yang H."/>
            <person name="Mattaini K.R."/>
            <person name="Hunter K.W."/>
        </authorList>
    </citation>
    <scope>INTERACTION WITH RRP1B</scope>
</reference>
<reference key="11">
    <citation type="journal article" date="2009" name="Sci. Signal.">
        <title>Quantitative phosphoproteomic analysis of T cell receptor signaling reveals system-wide modulation of protein-protein interactions.</title>
        <authorList>
            <person name="Mayya V."/>
            <person name="Lundgren D.H."/>
            <person name="Hwang S.-I."/>
            <person name="Rezaul K."/>
            <person name="Wu L."/>
            <person name="Eng J.K."/>
            <person name="Rodionov V."/>
            <person name="Han D.K."/>
        </authorList>
    </citation>
    <scope>PHOSPHORYLATION [LARGE SCALE ANALYSIS] AT SER-134; SER-201; SER-203 AND SER-204</scope>
    <scope>IDENTIFICATION BY MASS SPECTROMETRY [LARGE SCALE ANALYSIS]</scope>
    <source>
        <tissue>Leukemic T-cell</tissue>
    </source>
</reference>
<reference key="12">
    <citation type="journal article" date="2010" name="Sci. Signal.">
        <title>Quantitative phosphoproteomics reveals widespread full phosphorylation site occupancy during mitosis.</title>
        <authorList>
            <person name="Olsen J.V."/>
            <person name="Vermeulen M."/>
            <person name="Santamaria A."/>
            <person name="Kumar C."/>
            <person name="Miller M.L."/>
            <person name="Jensen L.J."/>
            <person name="Gnad F."/>
            <person name="Cox J."/>
            <person name="Jensen T.S."/>
            <person name="Nigg E.A."/>
            <person name="Brunak S."/>
            <person name="Mann M."/>
        </authorList>
    </citation>
    <scope>PHOSPHORYLATION [LARGE SCALE ANALYSIS] AT SER-204</scope>
    <scope>IDENTIFICATION BY MASS SPECTROMETRY [LARGE SCALE ANALYSIS]</scope>
    <source>
        <tissue>Cervix carcinoma</tissue>
    </source>
</reference>
<reference key="13">
    <citation type="journal article" date="2011" name="BMC Syst. Biol.">
        <title>Initial characterization of the human central proteome.</title>
        <authorList>
            <person name="Burkard T.R."/>
            <person name="Planyavsky M."/>
            <person name="Kaupe I."/>
            <person name="Breitwieser F.P."/>
            <person name="Buerckstuemmer T."/>
            <person name="Bennett K.L."/>
            <person name="Superti-Furga G."/>
            <person name="Colinge J."/>
        </authorList>
    </citation>
    <scope>IDENTIFICATION BY MASS SPECTROMETRY [LARGE SCALE ANALYSIS]</scope>
</reference>
<reference key="14">
    <citation type="journal article" date="2011" name="Sci. Signal.">
        <title>System-wide temporal characterization of the proteome and phosphoproteome of human embryonic stem cell differentiation.</title>
        <authorList>
            <person name="Rigbolt K.T."/>
            <person name="Prokhorova T.A."/>
            <person name="Akimov V."/>
            <person name="Henningsen J."/>
            <person name="Johansen P.T."/>
            <person name="Kratchmarova I."/>
            <person name="Kassem M."/>
            <person name="Mann M."/>
            <person name="Olsen J.V."/>
            <person name="Blagoev B."/>
        </authorList>
    </citation>
    <scope>PHOSPHORYLATION [LARGE SCALE ANALYSIS] AT SER-324</scope>
    <scope>IDENTIFICATION BY MASS SPECTROMETRY [LARGE SCALE ANALYSIS]</scope>
</reference>
<reference key="15">
    <citation type="journal article" date="2012" name="Mol. Cell. Proteomics">
        <title>Comparative large-scale characterisation of plant vs. mammal proteins reveals similar and idiosyncratic N-alpha acetylation features.</title>
        <authorList>
            <person name="Bienvenut W.V."/>
            <person name="Sumpton D."/>
            <person name="Martinez A."/>
            <person name="Lilla S."/>
            <person name="Espagne C."/>
            <person name="Meinnel T."/>
            <person name="Giglione C."/>
        </authorList>
    </citation>
    <scope>ACETYLATION [LARGE SCALE ANALYSIS] AT SER-2</scope>
    <scope>CLEAVAGE OF INITIATOR METHIONINE [LARGE SCALE ANALYSIS]</scope>
    <scope>IDENTIFICATION BY MASS SPECTROMETRY [LARGE SCALE ANALYSIS]</scope>
</reference>
<reference key="16">
    <citation type="journal article" date="2013" name="J. Proteome Res.">
        <title>Toward a comprehensive characterization of a human cancer cell phosphoproteome.</title>
        <authorList>
            <person name="Zhou H."/>
            <person name="Di Palma S."/>
            <person name="Preisinger C."/>
            <person name="Peng M."/>
            <person name="Polat A.N."/>
            <person name="Heck A.J."/>
            <person name="Mohammed S."/>
        </authorList>
    </citation>
    <scope>PHOSPHORYLATION [LARGE SCALE ANALYSIS] AT SER-2 AND SER-324</scope>
    <scope>IDENTIFICATION BY MASS SPECTROMETRY [LARGE SCALE ANALYSIS]</scope>
    <source>
        <tissue>Cervix carcinoma</tissue>
        <tissue>Erythroleukemia</tissue>
    </source>
</reference>
<reference key="17">
    <citation type="journal article" date="2014" name="Mol. Cell. Proteomics">
        <title>Immunoaffinity enrichment and mass spectrometry analysis of protein methylation.</title>
        <authorList>
            <person name="Guo A."/>
            <person name="Gu H."/>
            <person name="Zhou J."/>
            <person name="Mulhern D."/>
            <person name="Wang Y."/>
            <person name="Lee K.A."/>
            <person name="Yang V."/>
            <person name="Aguiar M."/>
            <person name="Kornhauser J."/>
            <person name="Jia X."/>
            <person name="Ren J."/>
            <person name="Beausoleil S.A."/>
            <person name="Silva J.C."/>
            <person name="Vemulapalli V."/>
            <person name="Bedford M.T."/>
            <person name="Comb M.J."/>
        </authorList>
    </citation>
    <scope>METHYLATION [LARGE SCALE ANALYSIS] AT ARG-251 AND ARG-326</scope>
    <scope>IDENTIFICATION BY MASS SPECTROMETRY [LARGE SCALE ANALYSIS]</scope>
    <source>
        <tissue>Colon carcinoma</tissue>
    </source>
</reference>
<gene>
    <name type="primary">YBX3</name>
    <name type="synonym">CSDA</name>
    <name type="synonym">DBPA</name>
</gene>
<feature type="initiator methionine" description="Removed" evidence="13 17">
    <location>
        <position position="1"/>
    </location>
</feature>
<feature type="chain" id="PRO_0000100214" description="Y-box-binding protein 3">
    <location>
        <begin position="2"/>
        <end position="372"/>
    </location>
</feature>
<feature type="domain" description="CSD">
    <location>
        <begin position="93"/>
        <end position="157"/>
    </location>
</feature>
<feature type="region of interest" description="Disordered" evidence="4">
    <location>
        <begin position="1"/>
        <end position="82"/>
    </location>
</feature>
<feature type="region of interest" description="Disordered" evidence="4">
    <location>
        <begin position="181"/>
        <end position="372"/>
    </location>
</feature>
<feature type="compositionally biased region" description="Low complexity" evidence="4">
    <location>
        <begin position="7"/>
        <end position="28"/>
    </location>
</feature>
<feature type="compositionally biased region" description="Low complexity" evidence="4">
    <location>
        <begin position="35"/>
        <end position="79"/>
    </location>
</feature>
<feature type="compositionally biased region" description="Basic residues" evidence="4">
    <location>
        <begin position="222"/>
        <end position="238"/>
    </location>
</feature>
<feature type="compositionally biased region" description="Polar residues" evidence="4">
    <location>
        <begin position="314"/>
        <end position="324"/>
    </location>
</feature>
<feature type="compositionally biased region" description="Basic residues" evidence="4">
    <location>
        <begin position="327"/>
        <end position="340"/>
    </location>
</feature>
<feature type="modified residue" description="N-acetylserine" evidence="13 17">
    <location>
        <position position="2"/>
    </location>
</feature>
<feature type="modified residue" description="Phosphoserine" evidence="18">
    <location>
        <position position="2"/>
    </location>
</feature>
<feature type="modified residue" description="Phosphoserine" evidence="12">
    <location>
        <position position="34"/>
    </location>
</feature>
<feature type="modified residue" description="Phosphoserine" evidence="14">
    <location>
        <position position="134"/>
    </location>
</feature>
<feature type="modified residue" description="Phosphoserine" evidence="12 14">
    <location>
        <position position="201"/>
    </location>
</feature>
<feature type="modified residue" description="Phosphoserine" evidence="12 14">
    <location>
        <position position="203"/>
    </location>
</feature>
<feature type="modified residue" description="Phosphoserine" evidence="12 14 15">
    <location>
        <position position="204"/>
    </location>
</feature>
<feature type="modified residue" description="Omega-N-methylarginine" evidence="19">
    <location>
        <position position="251"/>
    </location>
</feature>
<feature type="modified residue" description="Phosphoserine" evidence="16 18">
    <location>
        <position position="324"/>
    </location>
</feature>
<feature type="modified residue" description="Omega-N-methylarginine" evidence="19">
    <location>
        <position position="326"/>
    </location>
</feature>
<feature type="modified residue" description="Phosphoserine" evidence="2">
    <location>
        <position position="346"/>
    </location>
</feature>
<feature type="modified residue" description="Phosphoserine" evidence="2">
    <location>
        <position position="369"/>
    </location>
</feature>
<feature type="modified residue" description="Phosphoserine" evidence="2">
    <location>
        <position position="370"/>
    </location>
</feature>
<feature type="splice variant" id="VSP_001135" description="In isoform 2." evidence="9">
    <location>
        <begin position="192"/>
        <end position="260"/>
    </location>
</feature>
<feature type="splice variant" id="VSP_001136" description="In isoform 3." evidence="10">
    <original>RPPNAPSQDGKEAKAGEAPTENPAPPTQQSSAE</original>
    <variation>PSS</variation>
    <location>
        <begin position="340"/>
        <end position="372"/>
    </location>
</feature>
<feature type="sequence variant" id="VAR_013114" description="In dbSNP:rs1126501." evidence="5 7 8">
    <original>T</original>
    <variation>A</variation>
    <location>
        <position position="75"/>
    </location>
</feature>
<organism>
    <name type="scientific">Homo sapiens</name>
    <name type="common">Human</name>
    <dbReference type="NCBI Taxonomy" id="9606"/>
    <lineage>
        <taxon>Eukaryota</taxon>
        <taxon>Metazoa</taxon>
        <taxon>Chordata</taxon>
        <taxon>Craniata</taxon>
        <taxon>Vertebrata</taxon>
        <taxon>Euteleostomi</taxon>
        <taxon>Mammalia</taxon>
        <taxon>Eutheria</taxon>
        <taxon>Euarchontoglires</taxon>
        <taxon>Primates</taxon>
        <taxon>Haplorrhini</taxon>
        <taxon>Catarrhini</taxon>
        <taxon>Hominidae</taxon>
        <taxon>Homo</taxon>
    </lineage>
</organism>